<dbReference type="EMBL" id="CP000487">
    <property type="protein sequence ID" value="ABK82252.1"/>
    <property type="molecule type" value="Genomic_DNA"/>
</dbReference>
<dbReference type="RefSeq" id="WP_002850783.1">
    <property type="nucleotide sequence ID" value="NC_008599.1"/>
</dbReference>
<dbReference type="SMR" id="A0RRI8"/>
<dbReference type="GeneID" id="61065514"/>
<dbReference type="KEGG" id="cff:CFF8240_1701"/>
<dbReference type="eggNOG" id="COG0290">
    <property type="taxonomic scope" value="Bacteria"/>
</dbReference>
<dbReference type="HOGENOM" id="CLU_054919_3_2_7"/>
<dbReference type="Proteomes" id="UP000000760">
    <property type="component" value="Chromosome"/>
</dbReference>
<dbReference type="GO" id="GO:0005829">
    <property type="term" value="C:cytosol"/>
    <property type="evidence" value="ECO:0007669"/>
    <property type="project" value="TreeGrafter"/>
</dbReference>
<dbReference type="GO" id="GO:0016020">
    <property type="term" value="C:membrane"/>
    <property type="evidence" value="ECO:0007669"/>
    <property type="project" value="TreeGrafter"/>
</dbReference>
<dbReference type="GO" id="GO:0043022">
    <property type="term" value="F:ribosome binding"/>
    <property type="evidence" value="ECO:0007669"/>
    <property type="project" value="TreeGrafter"/>
</dbReference>
<dbReference type="GO" id="GO:0003743">
    <property type="term" value="F:translation initiation factor activity"/>
    <property type="evidence" value="ECO:0007669"/>
    <property type="project" value="UniProtKB-UniRule"/>
</dbReference>
<dbReference type="GO" id="GO:0032790">
    <property type="term" value="P:ribosome disassembly"/>
    <property type="evidence" value="ECO:0007669"/>
    <property type="project" value="TreeGrafter"/>
</dbReference>
<dbReference type="FunFam" id="3.10.20.80:FF:000001">
    <property type="entry name" value="Translation initiation factor IF-3"/>
    <property type="match status" value="1"/>
</dbReference>
<dbReference type="Gene3D" id="3.30.110.10">
    <property type="entry name" value="Translation initiation factor 3 (IF-3), C-terminal domain"/>
    <property type="match status" value="1"/>
</dbReference>
<dbReference type="Gene3D" id="3.10.20.80">
    <property type="entry name" value="Translation initiation factor 3 (IF-3), N-terminal domain"/>
    <property type="match status" value="1"/>
</dbReference>
<dbReference type="HAMAP" id="MF_00080">
    <property type="entry name" value="IF_3"/>
    <property type="match status" value="1"/>
</dbReference>
<dbReference type="InterPro" id="IPR036788">
    <property type="entry name" value="T_IF-3_C_sf"/>
</dbReference>
<dbReference type="InterPro" id="IPR036787">
    <property type="entry name" value="T_IF-3_N_sf"/>
</dbReference>
<dbReference type="InterPro" id="IPR019813">
    <property type="entry name" value="Translation_initiation_fac3_CS"/>
</dbReference>
<dbReference type="InterPro" id="IPR001288">
    <property type="entry name" value="Translation_initiation_fac_3"/>
</dbReference>
<dbReference type="InterPro" id="IPR019815">
    <property type="entry name" value="Translation_initiation_fac_3_C"/>
</dbReference>
<dbReference type="InterPro" id="IPR019814">
    <property type="entry name" value="Translation_initiation_fac_3_N"/>
</dbReference>
<dbReference type="NCBIfam" id="TIGR00168">
    <property type="entry name" value="infC"/>
    <property type="match status" value="1"/>
</dbReference>
<dbReference type="PANTHER" id="PTHR10938">
    <property type="entry name" value="TRANSLATION INITIATION FACTOR IF-3"/>
    <property type="match status" value="1"/>
</dbReference>
<dbReference type="PANTHER" id="PTHR10938:SF0">
    <property type="entry name" value="TRANSLATION INITIATION FACTOR IF-3, MITOCHONDRIAL"/>
    <property type="match status" value="1"/>
</dbReference>
<dbReference type="Pfam" id="PF00707">
    <property type="entry name" value="IF3_C"/>
    <property type="match status" value="1"/>
</dbReference>
<dbReference type="Pfam" id="PF05198">
    <property type="entry name" value="IF3_N"/>
    <property type="match status" value="1"/>
</dbReference>
<dbReference type="SUPFAM" id="SSF55200">
    <property type="entry name" value="Translation initiation factor IF3, C-terminal domain"/>
    <property type="match status" value="1"/>
</dbReference>
<dbReference type="SUPFAM" id="SSF54364">
    <property type="entry name" value="Translation initiation factor IF3, N-terminal domain"/>
    <property type="match status" value="1"/>
</dbReference>
<dbReference type="PROSITE" id="PS00938">
    <property type="entry name" value="IF3"/>
    <property type="match status" value="1"/>
</dbReference>
<evidence type="ECO:0000255" key="1">
    <source>
        <dbReference type="HAMAP-Rule" id="MF_00080"/>
    </source>
</evidence>
<protein>
    <recommendedName>
        <fullName evidence="1">Translation initiation factor IF-3</fullName>
    </recommendedName>
</protein>
<comment type="function">
    <text evidence="1">IF-3 binds to the 30S ribosomal subunit and shifts the equilibrium between 70S ribosomes and their 50S and 30S subunits in favor of the free subunits, thus enhancing the availability of 30S subunits on which protein synthesis initiation begins.</text>
</comment>
<comment type="subunit">
    <text evidence="1">Monomer.</text>
</comment>
<comment type="subcellular location">
    <subcellularLocation>
        <location evidence="1">Cytoplasm</location>
    </subcellularLocation>
</comment>
<comment type="similarity">
    <text evidence="1">Belongs to the IF-3 family.</text>
</comment>
<keyword id="KW-0963">Cytoplasm</keyword>
<keyword id="KW-0396">Initiation factor</keyword>
<keyword id="KW-0648">Protein biosynthesis</keyword>
<sequence>MSKEKDVYLNEEIRASEVRCVGDDGTAYGVISRGEAQDIANRMGLDLVLIAPDAKPPVCKIMDYGKFRYQQEKKQKEAKKKQKVIEVKEIKLSVKIAQNDINYKIKHAQEFLEEGKHVKFRVFLKGREMATPDIGVVMLERIWELVKDYADRDKVPALEGRYVNMLVTPKKG</sequence>
<feature type="chain" id="PRO_1000004532" description="Translation initiation factor IF-3">
    <location>
        <begin position="1"/>
        <end position="172"/>
    </location>
</feature>
<name>IF3_CAMFF</name>
<organism>
    <name type="scientific">Campylobacter fetus subsp. fetus (strain 82-40)</name>
    <dbReference type="NCBI Taxonomy" id="360106"/>
    <lineage>
        <taxon>Bacteria</taxon>
        <taxon>Pseudomonadati</taxon>
        <taxon>Campylobacterota</taxon>
        <taxon>Epsilonproteobacteria</taxon>
        <taxon>Campylobacterales</taxon>
        <taxon>Campylobacteraceae</taxon>
        <taxon>Campylobacter</taxon>
    </lineage>
</organism>
<reference key="1">
    <citation type="submission" date="2006-11" db="EMBL/GenBank/DDBJ databases">
        <title>Sequence of Campylobacter fetus subsp. fetus 82-40.</title>
        <authorList>
            <person name="Fouts D.E."/>
            <person name="Nelson K.E."/>
        </authorList>
    </citation>
    <scope>NUCLEOTIDE SEQUENCE [LARGE SCALE GENOMIC DNA]</scope>
    <source>
        <strain>82-40</strain>
    </source>
</reference>
<gene>
    <name evidence="1" type="primary">infC</name>
    <name type="ordered locus">CFF8240_1701</name>
</gene>
<proteinExistence type="inferred from homology"/>
<accession>A0RRI8</accession>